<gene>
    <name evidence="1" type="primary">rplI</name>
    <name type="ordered locus">Ddes_2022</name>
</gene>
<reference key="1">
    <citation type="submission" date="2009-01" db="EMBL/GenBank/DDBJ databases">
        <title>Complete sequence of Desulfovibrio desulfuricans subsp. desulfuricans str. ATCC 27774.</title>
        <authorList>
            <consortium name="US DOE Joint Genome Institute"/>
            <person name="Lucas S."/>
            <person name="Copeland A."/>
            <person name="Lapidus A."/>
            <person name="Glavina del Rio T."/>
            <person name="Tice H."/>
            <person name="Bruce D."/>
            <person name="Goodwin L."/>
            <person name="Pitluck S."/>
            <person name="Sims D."/>
            <person name="Lu M."/>
            <person name="Kiss H."/>
            <person name="Meineke L."/>
            <person name="Brettin T."/>
            <person name="Detter J.C."/>
            <person name="Han C."/>
            <person name="Larimer F."/>
            <person name="Land M."/>
            <person name="Hauser L."/>
            <person name="Kyrpides N."/>
            <person name="Ovchinnikova G."/>
            <person name="Hazen T.C."/>
        </authorList>
    </citation>
    <scope>NUCLEOTIDE SEQUENCE [LARGE SCALE GENOMIC DNA]</scope>
    <source>
        <strain>ATCC 27774 / DSM 6949 / MB</strain>
    </source>
</reference>
<keyword id="KW-0687">Ribonucleoprotein</keyword>
<keyword id="KW-0689">Ribosomal protein</keyword>
<keyword id="KW-0694">RNA-binding</keyword>
<keyword id="KW-0699">rRNA-binding</keyword>
<protein>
    <recommendedName>
        <fullName evidence="1">Large ribosomal subunit protein bL9</fullName>
    </recommendedName>
    <alternativeName>
        <fullName evidence="3">50S ribosomal protein L9</fullName>
    </alternativeName>
</protein>
<evidence type="ECO:0000255" key="1">
    <source>
        <dbReference type="HAMAP-Rule" id="MF_00503"/>
    </source>
</evidence>
<evidence type="ECO:0000256" key="2">
    <source>
        <dbReference type="SAM" id="MobiDB-lite"/>
    </source>
</evidence>
<evidence type="ECO:0000305" key="3"/>
<sequence>MKLILRADVENLGSLGDVVDVKPGYGRNFLLPQGLAMVASQANLKVFEQERKKLQAHMDALRAEAQDMQARLEALDVVITMHVGDNDKLYGSVTTTIIGDAIAALGVDVDRRRILMDAPIRTLGEHPVRVRLHPSVIALVPVKVVSDHQSFEEEPAPEAPAEEAEAAE</sequence>
<feature type="chain" id="PRO_1000196241" description="Large ribosomal subunit protein bL9">
    <location>
        <begin position="1"/>
        <end position="168"/>
    </location>
</feature>
<feature type="region of interest" description="Disordered" evidence="2">
    <location>
        <begin position="149"/>
        <end position="168"/>
    </location>
</feature>
<feature type="compositionally biased region" description="Acidic residues" evidence="2">
    <location>
        <begin position="152"/>
        <end position="168"/>
    </location>
</feature>
<proteinExistence type="inferred from homology"/>
<accession>B8J3A8</accession>
<dbReference type="EMBL" id="CP001358">
    <property type="protein sequence ID" value="ACL49918.1"/>
    <property type="molecule type" value="Genomic_DNA"/>
</dbReference>
<dbReference type="SMR" id="B8J3A8"/>
<dbReference type="STRING" id="525146.Ddes_2022"/>
<dbReference type="KEGG" id="dds:Ddes_2022"/>
<dbReference type="eggNOG" id="COG0359">
    <property type="taxonomic scope" value="Bacteria"/>
</dbReference>
<dbReference type="HOGENOM" id="CLU_078938_3_0_7"/>
<dbReference type="GO" id="GO:1990904">
    <property type="term" value="C:ribonucleoprotein complex"/>
    <property type="evidence" value="ECO:0007669"/>
    <property type="project" value="UniProtKB-KW"/>
</dbReference>
<dbReference type="GO" id="GO:0005840">
    <property type="term" value="C:ribosome"/>
    <property type="evidence" value="ECO:0007669"/>
    <property type="project" value="UniProtKB-KW"/>
</dbReference>
<dbReference type="GO" id="GO:0019843">
    <property type="term" value="F:rRNA binding"/>
    <property type="evidence" value="ECO:0007669"/>
    <property type="project" value="UniProtKB-UniRule"/>
</dbReference>
<dbReference type="GO" id="GO:0003735">
    <property type="term" value="F:structural constituent of ribosome"/>
    <property type="evidence" value="ECO:0007669"/>
    <property type="project" value="InterPro"/>
</dbReference>
<dbReference type="GO" id="GO:0006412">
    <property type="term" value="P:translation"/>
    <property type="evidence" value="ECO:0007669"/>
    <property type="project" value="UniProtKB-UniRule"/>
</dbReference>
<dbReference type="FunFam" id="3.40.5.10:FF:000003">
    <property type="entry name" value="50S ribosomal protein L9"/>
    <property type="match status" value="1"/>
</dbReference>
<dbReference type="Gene3D" id="3.10.430.100">
    <property type="entry name" value="Ribosomal protein L9, C-terminal domain"/>
    <property type="match status" value="1"/>
</dbReference>
<dbReference type="Gene3D" id="3.40.5.10">
    <property type="entry name" value="Ribosomal protein L9, N-terminal domain"/>
    <property type="match status" value="1"/>
</dbReference>
<dbReference type="HAMAP" id="MF_00503">
    <property type="entry name" value="Ribosomal_bL9"/>
    <property type="match status" value="1"/>
</dbReference>
<dbReference type="InterPro" id="IPR000244">
    <property type="entry name" value="Ribosomal_bL9"/>
</dbReference>
<dbReference type="InterPro" id="IPR009027">
    <property type="entry name" value="Ribosomal_bL9/RNase_H1_N"/>
</dbReference>
<dbReference type="InterPro" id="IPR020594">
    <property type="entry name" value="Ribosomal_bL9_bac/chp"/>
</dbReference>
<dbReference type="InterPro" id="IPR020069">
    <property type="entry name" value="Ribosomal_bL9_C"/>
</dbReference>
<dbReference type="InterPro" id="IPR036791">
    <property type="entry name" value="Ribosomal_bL9_C_sf"/>
</dbReference>
<dbReference type="InterPro" id="IPR020070">
    <property type="entry name" value="Ribosomal_bL9_N"/>
</dbReference>
<dbReference type="InterPro" id="IPR036935">
    <property type="entry name" value="Ribosomal_bL9_N_sf"/>
</dbReference>
<dbReference type="NCBIfam" id="TIGR00158">
    <property type="entry name" value="L9"/>
    <property type="match status" value="1"/>
</dbReference>
<dbReference type="PANTHER" id="PTHR21368">
    <property type="entry name" value="50S RIBOSOMAL PROTEIN L9"/>
    <property type="match status" value="1"/>
</dbReference>
<dbReference type="Pfam" id="PF03948">
    <property type="entry name" value="Ribosomal_L9_C"/>
    <property type="match status" value="1"/>
</dbReference>
<dbReference type="Pfam" id="PF01281">
    <property type="entry name" value="Ribosomal_L9_N"/>
    <property type="match status" value="1"/>
</dbReference>
<dbReference type="SUPFAM" id="SSF55658">
    <property type="entry name" value="L9 N-domain-like"/>
    <property type="match status" value="1"/>
</dbReference>
<dbReference type="SUPFAM" id="SSF55653">
    <property type="entry name" value="Ribosomal protein L9 C-domain"/>
    <property type="match status" value="1"/>
</dbReference>
<dbReference type="PROSITE" id="PS00651">
    <property type="entry name" value="RIBOSOMAL_L9"/>
    <property type="match status" value="1"/>
</dbReference>
<comment type="function">
    <text evidence="1">Binds to the 23S rRNA.</text>
</comment>
<comment type="similarity">
    <text evidence="1">Belongs to the bacterial ribosomal protein bL9 family.</text>
</comment>
<organism>
    <name type="scientific">Desulfovibrio desulfuricans (strain ATCC 27774 / DSM 6949 / MB)</name>
    <dbReference type="NCBI Taxonomy" id="525146"/>
    <lineage>
        <taxon>Bacteria</taxon>
        <taxon>Pseudomonadati</taxon>
        <taxon>Thermodesulfobacteriota</taxon>
        <taxon>Desulfovibrionia</taxon>
        <taxon>Desulfovibrionales</taxon>
        <taxon>Desulfovibrionaceae</taxon>
        <taxon>Desulfovibrio</taxon>
    </lineage>
</organism>
<name>RL9_DESDA</name>